<keyword id="KW-0012">Acyltransferase</keyword>
<keyword id="KW-0963">Cytoplasm</keyword>
<keyword id="KW-0808">Transferase</keyword>
<reference key="1">
    <citation type="journal article" date="2011" name="J. Bacteriol.">
        <title>Comparative genomics of 28 Salmonella enterica isolates: evidence for CRISPR-mediated adaptive sublineage evolution.</title>
        <authorList>
            <person name="Fricke W.F."/>
            <person name="Mammel M.K."/>
            <person name="McDermott P.F."/>
            <person name="Tartera C."/>
            <person name="White D.G."/>
            <person name="Leclerc J.E."/>
            <person name="Ravel J."/>
            <person name="Cebula T.A."/>
        </authorList>
    </citation>
    <scope>NUCLEOTIDE SEQUENCE [LARGE SCALE GENOMIC DNA]</scope>
    <source>
        <strain>SL476</strain>
    </source>
</reference>
<evidence type="ECO:0000255" key="1">
    <source>
        <dbReference type="HAMAP-Rule" id="MF_00688"/>
    </source>
</evidence>
<dbReference type="EC" id="2.3.2.6" evidence="1"/>
<dbReference type="EMBL" id="CP001120">
    <property type="protein sequence ID" value="ACF66067.1"/>
    <property type="molecule type" value="Genomic_DNA"/>
</dbReference>
<dbReference type="RefSeq" id="WP_001241650.1">
    <property type="nucleotide sequence ID" value="NC_011083.1"/>
</dbReference>
<dbReference type="SMR" id="B4TD16"/>
<dbReference type="KEGG" id="seh:SeHA_C1054"/>
<dbReference type="HOGENOM" id="CLU_075045_0_0_6"/>
<dbReference type="Proteomes" id="UP000001866">
    <property type="component" value="Chromosome"/>
</dbReference>
<dbReference type="GO" id="GO:0005737">
    <property type="term" value="C:cytoplasm"/>
    <property type="evidence" value="ECO:0007669"/>
    <property type="project" value="UniProtKB-SubCell"/>
</dbReference>
<dbReference type="GO" id="GO:0008914">
    <property type="term" value="F:leucyl-tRNA--protein transferase activity"/>
    <property type="evidence" value="ECO:0007669"/>
    <property type="project" value="UniProtKB-UniRule"/>
</dbReference>
<dbReference type="GO" id="GO:0030163">
    <property type="term" value="P:protein catabolic process"/>
    <property type="evidence" value="ECO:0007669"/>
    <property type="project" value="UniProtKB-UniRule"/>
</dbReference>
<dbReference type="FunFam" id="3.30.70.3550:FF:000001">
    <property type="entry name" value="Leucyl/phenylalanyl-tRNA--protein transferase"/>
    <property type="match status" value="1"/>
</dbReference>
<dbReference type="FunFam" id="3.40.630.70:FF:000001">
    <property type="entry name" value="Leucyl/phenylalanyl-tRNA--protein transferase"/>
    <property type="match status" value="1"/>
</dbReference>
<dbReference type="Gene3D" id="3.40.630.70">
    <property type="entry name" value="Leucyl/phenylalanyl-tRNA-protein transferase, C-terminal domain"/>
    <property type="match status" value="1"/>
</dbReference>
<dbReference type="Gene3D" id="3.30.70.3550">
    <property type="entry name" value="Leucyl/phenylalanyl-tRNA-protein transferase, N-terminal domain"/>
    <property type="match status" value="1"/>
</dbReference>
<dbReference type="HAMAP" id="MF_00688">
    <property type="entry name" value="Leu_Phe_trans"/>
    <property type="match status" value="1"/>
</dbReference>
<dbReference type="InterPro" id="IPR016181">
    <property type="entry name" value="Acyl_CoA_acyltransferase"/>
</dbReference>
<dbReference type="InterPro" id="IPR004616">
    <property type="entry name" value="Leu/Phe-tRNA_Trfase"/>
</dbReference>
<dbReference type="InterPro" id="IPR042203">
    <property type="entry name" value="Leu/Phe-tRNA_Trfase_C"/>
</dbReference>
<dbReference type="InterPro" id="IPR042221">
    <property type="entry name" value="Leu/Phe-tRNA_Trfase_N"/>
</dbReference>
<dbReference type="NCBIfam" id="TIGR00667">
    <property type="entry name" value="aat"/>
    <property type="match status" value="1"/>
</dbReference>
<dbReference type="PANTHER" id="PTHR30098">
    <property type="entry name" value="LEUCYL/PHENYLALANYL-TRNA--PROTEIN TRANSFERASE"/>
    <property type="match status" value="1"/>
</dbReference>
<dbReference type="PANTHER" id="PTHR30098:SF2">
    <property type="entry name" value="LEUCYL_PHENYLALANYL-TRNA--PROTEIN TRANSFERASE"/>
    <property type="match status" value="1"/>
</dbReference>
<dbReference type="Pfam" id="PF03588">
    <property type="entry name" value="Leu_Phe_trans"/>
    <property type="match status" value="1"/>
</dbReference>
<dbReference type="SUPFAM" id="SSF55729">
    <property type="entry name" value="Acyl-CoA N-acyltransferases (Nat)"/>
    <property type="match status" value="1"/>
</dbReference>
<sequence length="234" mass="26673">MRLVQLSRHSIAFPSPEGALREPNGLLALGGDLSPARLLMAYQHGIFPWFSPGDPILWWSPDPRAVLWPEKFHLSRSMKRFHNASPYRVTLNYAFDRVIDGCANHRDEGTWITRGIEEAYRRLHELGHAHSIEVWRDRELVGGMYGVSQGALFCGESMFSRQENASKTALLVFCAEFTRHGGKLIDCQVLNSHTASLGAIEIPRRDYLDHLAALRQQPLASRFWVPRTLFLPRK</sequence>
<organism>
    <name type="scientific">Salmonella heidelberg (strain SL476)</name>
    <dbReference type="NCBI Taxonomy" id="454169"/>
    <lineage>
        <taxon>Bacteria</taxon>
        <taxon>Pseudomonadati</taxon>
        <taxon>Pseudomonadota</taxon>
        <taxon>Gammaproteobacteria</taxon>
        <taxon>Enterobacterales</taxon>
        <taxon>Enterobacteriaceae</taxon>
        <taxon>Salmonella</taxon>
    </lineage>
</organism>
<proteinExistence type="inferred from homology"/>
<gene>
    <name evidence="1" type="primary">aat</name>
    <name type="ordered locus">SeHA_C1054</name>
</gene>
<name>LFTR_SALHS</name>
<protein>
    <recommendedName>
        <fullName evidence="1">Leucyl/phenylalanyl-tRNA--protein transferase</fullName>
        <ecNumber evidence="1">2.3.2.6</ecNumber>
    </recommendedName>
    <alternativeName>
        <fullName evidence="1">L/F-transferase</fullName>
    </alternativeName>
    <alternativeName>
        <fullName evidence="1">Leucyltransferase</fullName>
    </alternativeName>
    <alternativeName>
        <fullName evidence="1">Phenyalanyltransferase</fullName>
    </alternativeName>
</protein>
<accession>B4TD16</accession>
<comment type="function">
    <text evidence="1">Functions in the N-end rule pathway of protein degradation where it conjugates Leu, Phe and, less efficiently, Met from aminoacyl-tRNAs to the N-termini of proteins containing an N-terminal arginine or lysine.</text>
</comment>
<comment type="catalytic activity">
    <reaction evidence="1">
        <text>N-terminal L-lysyl-[protein] + L-leucyl-tRNA(Leu) = N-terminal L-leucyl-L-lysyl-[protein] + tRNA(Leu) + H(+)</text>
        <dbReference type="Rhea" id="RHEA:12340"/>
        <dbReference type="Rhea" id="RHEA-COMP:9613"/>
        <dbReference type="Rhea" id="RHEA-COMP:9622"/>
        <dbReference type="Rhea" id="RHEA-COMP:12670"/>
        <dbReference type="Rhea" id="RHEA-COMP:12671"/>
        <dbReference type="ChEBI" id="CHEBI:15378"/>
        <dbReference type="ChEBI" id="CHEBI:65249"/>
        <dbReference type="ChEBI" id="CHEBI:78442"/>
        <dbReference type="ChEBI" id="CHEBI:78494"/>
        <dbReference type="ChEBI" id="CHEBI:133043"/>
        <dbReference type="EC" id="2.3.2.6"/>
    </reaction>
</comment>
<comment type="catalytic activity">
    <reaction evidence="1">
        <text>N-terminal L-arginyl-[protein] + L-leucyl-tRNA(Leu) = N-terminal L-leucyl-L-arginyl-[protein] + tRNA(Leu) + H(+)</text>
        <dbReference type="Rhea" id="RHEA:50416"/>
        <dbReference type="Rhea" id="RHEA-COMP:9613"/>
        <dbReference type="Rhea" id="RHEA-COMP:9622"/>
        <dbReference type="Rhea" id="RHEA-COMP:12672"/>
        <dbReference type="Rhea" id="RHEA-COMP:12673"/>
        <dbReference type="ChEBI" id="CHEBI:15378"/>
        <dbReference type="ChEBI" id="CHEBI:64719"/>
        <dbReference type="ChEBI" id="CHEBI:78442"/>
        <dbReference type="ChEBI" id="CHEBI:78494"/>
        <dbReference type="ChEBI" id="CHEBI:133044"/>
        <dbReference type="EC" id="2.3.2.6"/>
    </reaction>
</comment>
<comment type="catalytic activity">
    <reaction evidence="1">
        <text>L-phenylalanyl-tRNA(Phe) + an N-terminal L-alpha-aminoacyl-[protein] = an N-terminal L-phenylalanyl-L-alpha-aminoacyl-[protein] + tRNA(Phe)</text>
        <dbReference type="Rhea" id="RHEA:43632"/>
        <dbReference type="Rhea" id="RHEA-COMP:9668"/>
        <dbReference type="Rhea" id="RHEA-COMP:9699"/>
        <dbReference type="Rhea" id="RHEA-COMP:10636"/>
        <dbReference type="Rhea" id="RHEA-COMP:10637"/>
        <dbReference type="ChEBI" id="CHEBI:78442"/>
        <dbReference type="ChEBI" id="CHEBI:78531"/>
        <dbReference type="ChEBI" id="CHEBI:78597"/>
        <dbReference type="ChEBI" id="CHEBI:83561"/>
        <dbReference type="EC" id="2.3.2.6"/>
    </reaction>
</comment>
<comment type="subcellular location">
    <subcellularLocation>
        <location evidence="1">Cytoplasm</location>
    </subcellularLocation>
</comment>
<comment type="similarity">
    <text evidence="1">Belongs to the L/F-transferase family.</text>
</comment>
<feature type="chain" id="PRO_1000131948" description="Leucyl/phenylalanyl-tRNA--protein transferase">
    <location>
        <begin position="1"/>
        <end position="234"/>
    </location>
</feature>